<sequence length="162" mass="19058">MLRQLRLTMDISGWIFLPWRRSMSNMKESPPPPPLASTFDDVIVDYEDPDYLPLPEYPLRPNEPLQTRKQRLLYQSRKRGMLENDLLLSTFAAKHLQSFSAEQTAQYDQLINGVSNDWDIYYWATDVKPTPKEYDTEIMGLLKEHVKNAERVSRLRQPDLNT</sequence>
<reference key="1">
    <citation type="journal article" date="2007" name="Nature">
        <title>Evolution of genes and genomes on the Drosophila phylogeny.</title>
        <authorList>
            <consortium name="Drosophila 12 genomes consortium"/>
        </authorList>
    </citation>
    <scope>NUCLEOTIDE SEQUENCE [LARGE SCALE GENOMIC DNA]</scope>
    <source>
        <strain>Tucson 14021-0224.01</strain>
    </source>
</reference>
<keyword id="KW-0143">Chaperone</keyword>
<keyword id="KW-0496">Mitochondrion</keyword>
<keyword id="KW-0809">Transit peptide</keyword>
<feature type="transit peptide" description="Mitochondrion" evidence="1">
    <location>
        <begin position="1"/>
        <end position="23"/>
    </location>
</feature>
<feature type="chain" id="PRO_0000383164" description="Succinate dehydrogenase assembly factor 2-A, mitochondrial">
    <location>
        <begin position="24"/>
        <end position="162"/>
    </location>
</feature>
<proteinExistence type="inferred from homology"/>
<name>SDF2A_DROER</name>
<gene>
    <name type="ORF">GG10665</name>
</gene>
<evidence type="ECO:0000255" key="1">
    <source>
        <dbReference type="HAMAP-Rule" id="MF_03057"/>
    </source>
</evidence>
<organism>
    <name type="scientific">Drosophila erecta</name>
    <name type="common">Fruit fly</name>
    <dbReference type="NCBI Taxonomy" id="7220"/>
    <lineage>
        <taxon>Eukaryota</taxon>
        <taxon>Metazoa</taxon>
        <taxon>Ecdysozoa</taxon>
        <taxon>Arthropoda</taxon>
        <taxon>Hexapoda</taxon>
        <taxon>Insecta</taxon>
        <taxon>Pterygota</taxon>
        <taxon>Neoptera</taxon>
        <taxon>Endopterygota</taxon>
        <taxon>Diptera</taxon>
        <taxon>Brachycera</taxon>
        <taxon>Muscomorpha</taxon>
        <taxon>Ephydroidea</taxon>
        <taxon>Drosophilidae</taxon>
        <taxon>Drosophila</taxon>
        <taxon>Sophophora</taxon>
    </lineage>
</organism>
<dbReference type="EMBL" id="CH954177">
    <property type="protein sequence ID" value="EDV59556.1"/>
    <property type="molecule type" value="Genomic_DNA"/>
</dbReference>
<dbReference type="SMR" id="B3N8S9"/>
<dbReference type="EnsemblMetazoa" id="FBtr0130719">
    <property type="protein sequence ID" value="FBpp0129211"/>
    <property type="gene ID" value="FBgn0102972"/>
</dbReference>
<dbReference type="EnsemblMetazoa" id="XM_001970461.3">
    <property type="protein sequence ID" value="XP_001970497.1"/>
    <property type="gene ID" value="LOC6542472"/>
</dbReference>
<dbReference type="GeneID" id="6542472"/>
<dbReference type="KEGG" id="der:6542472"/>
<dbReference type="eggNOG" id="KOG3326">
    <property type="taxonomic scope" value="Eukaryota"/>
</dbReference>
<dbReference type="HOGENOM" id="CLU_103054_0_3_1"/>
<dbReference type="OMA" id="YGKPQNP"/>
<dbReference type="OrthoDB" id="284292at2759"/>
<dbReference type="PhylomeDB" id="B3N8S9"/>
<dbReference type="Proteomes" id="UP000008711">
    <property type="component" value="Unassembled WGS sequence"/>
</dbReference>
<dbReference type="GO" id="GO:0005759">
    <property type="term" value="C:mitochondrial matrix"/>
    <property type="evidence" value="ECO:0007669"/>
    <property type="project" value="UniProtKB-SubCell"/>
</dbReference>
<dbReference type="GO" id="GO:0005739">
    <property type="term" value="C:mitochondrion"/>
    <property type="evidence" value="ECO:0000250"/>
    <property type="project" value="UniProtKB"/>
</dbReference>
<dbReference type="GO" id="GO:0055070">
    <property type="term" value="P:copper ion homeostasis"/>
    <property type="evidence" value="ECO:0007669"/>
    <property type="project" value="EnsemblMetazoa"/>
</dbReference>
<dbReference type="GO" id="GO:0006121">
    <property type="term" value="P:mitochondrial electron transport, succinate to ubiquinone"/>
    <property type="evidence" value="ECO:0000250"/>
    <property type="project" value="UniProtKB"/>
</dbReference>
<dbReference type="GO" id="GO:0034553">
    <property type="term" value="P:mitochondrial respiratory chain complex II assembly"/>
    <property type="evidence" value="ECO:0007669"/>
    <property type="project" value="TreeGrafter"/>
</dbReference>
<dbReference type="GO" id="GO:0018293">
    <property type="term" value="P:protein-FAD linkage"/>
    <property type="evidence" value="ECO:0000250"/>
    <property type="project" value="UniProtKB"/>
</dbReference>
<dbReference type="GO" id="GO:0006099">
    <property type="term" value="P:tricarboxylic acid cycle"/>
    <property type="evidence" value="ECO:0007669"/>
    <property type="project" value="TreeGrafter"/>
</dbReference>
<dbReference type="FunFam" id="1.10.150.250:FF:000002">
    <property type="entry name" value="Succinate dehydrogenase assembly factor 2, mitochondrial"/>
    <property type="match status" value="1"/>
</dbReference>
<dbReference type="Gene3D" id="1.10.150.250">
    <property type="entry name" value="Flavinator of succinate dehydrogenase"/>
    <property type="match status" value="1"/>
</dbReference>
<dbReference type="HAMAP" id="MF_03057">
    <property type="entry name" value="SDHAF2"/>
    <property type="match status" value="1"/>
</dbReference>
<dbReference type="InterPro" id="IPR005631">
    <property type="entry name" value="SDH"/>
</dbReference>
<dbReference type="InterPro" id="IPR036714">
    <property type="entry name" value="SDH_sf"/>
</dbReference>
<dbReference type="InterPro" id="IPR028882">
    <property type="entry name" value="SDHAF2"/>
</dbReference>
<dbReference type="PANTHER" id="PTHR12469">
    <property type="entry name" value="PROTEIN EMI5 HOMOLOG, MITOCHONDRIAL"/>
    <property type="match status" value="1"/>
</dbReference>
<dbReference type="PANTHER" id="PTHR12469:SF2">
    <property type="entry name" value="SUCCINATE DEHYDROGENASE ASSEMBLY FACTOR 2, MITOCHONDRIAL"/>
    <property type="match status" value="1"/>
</dbReference>
<dbReference type="Pfam" id="PF03937">
    <property type="entry name" value="Sdh5"/>
    <property type="match status" value="1"/>
</dbReference>
<dbReference type="SUPFAM" id="SSF109910">
    <property type="entry name" value="YgfY-like"/>
    <property type="match status" value="1"/>
</dbReference>
<comment type="function">
    <text evidence="1">Plays an essential role in the assembly of succinate dehydrogenase (SDH), an enzyme complex (also referred to as respiratory complex II) that is a component of both the tricarboxylic acid (TCA) cycle and the mitochondrial electron transport chain, and which couples the oxidation of succinate to fumarate with the reduction of ubiquinone (coenzyme Q) to ubiquinol. Required for flavinylation (covalent attachment of FAD) of the flavoprotein subunit of the SDH catalytic dimer.</text>
</comment>
<comment type="subunit">
    <text evidence="1">Interacts with the flavoprotein subunit within the SDH catalytic dimer.</text>
</comment>
<comment type="subcellular location">
    <subcellularLocation>
        <location evidence="1">Mitochondrion matrix</location>
    </subcellularLocation>
</comment>
<comment type="similarity">
    <text evidence="1">Belongs to the SDHAF2 family.</text>
</comment>
<accession>B3N8S9</accession>
<protein>
    <recommendedName>
        <fullName evidence="1">Succinate dehydrogenase assembly factor 2-A, mitochondrial</fullName>
        <shortName evidence="1">SDH assembly factor 2-A</shortName>
        <shortName evidence="1">SDHAF2-A</shortName>
    </recommendedName>
</protein>